<name>SP4A_BACAN</name>
<organism>
    <name type="scientific">Bacillus anthracis</name>
    <dbReference type="NCBI Taxonomy" id="1392"/>
    <lineage>
        <taxon>Bacteria</taxon>
        <taxon>Bacillati</taxon>
        <taxon>Bacillota</taxon>
        <taxon>Bacilli</taxon>
        <taxon>Bacillales</taxon>
        <taxon>Bacillaceae</taxon>
        <taxon>Bacillus</taxon>
        <taxon>Bacillus cereus group</taxon>
    </lineage>
</organism>
<accession>Q81SW4</accession>
<accession>E9QV53</accession>
<accession>E9QV54</accession>
<accession>Q6I143</accession>
<accession>Q6KUZ7</accession>
<sequence length="492" mass="55613">MEKVDIFKDIAERTGGDIYFGVVGAVRTGKSTFIKKFMELVVIPNIENESDRQRAQDELPQSAAGRTIMTTEPKFVPNQAVSIEVDEGLEVNIRLVDCVGYTVPGAKGYEDENGPRMINTPWYEEPIPFHEAAEIGTRKVIQEHSTIGVVITTDGTIGEIPRRDYIEAEERVVNELKEVGKPFIMIINTVQPYHPDTEQLRQSLSEEYDIPVIAMSVESLRETDVYNVLREALFEFPVLEVNVNLPSWVMVLNEGHWLRQSYQEAVQETVKDIKRLRDVDRVVWQFSQYEFIDRASLAGIDMGQGVAEIDLYAPDELYDQILKEVVGVEIRGKDHLLKLMLDLSHAKIEYDQVADALRMVKQTGYGVAAPALADMSLDEPEIIRHGSRFGVKLKAVAPSIHMIKVDVESTFEPIIGTEKQSEELVRYLMQDFEDDPLSIWNSDIFGRSLSSIVREGIQAKLSLMPENARYKLKETLERIINEGSGGLIAIIL</sequence>
<keyword id="KW-0067">ATP-binding</keyword>
<keyword id="KW-0963">Cytoplasm</keyword>
<keyword id="KW-0378">Hydrolase</keyword>
<keyword id="KW-0547">Nucleotide-binding</keyword>
<keyword id="KW-1185">Reference proteome</keyword>
<keyword id="KW-0749">Sporulation</keyword>
<reference evidence="6" key="1">
    <citation type="journal article" date="2003" name="Nature">
        <title>The genome sequence of Bacillus anthracis Ames and comparison to closely related bacteria.</title>
        <authorList>
            <person name="Read T.D."/>
            <person name="Peterson S.N."/>
            <person name="Tourasse N.J."/>
            <person name="Baillie L.W."/>
            <person name="Paulsen I.T."/>
            <person name="Nelson K.E."/>
            <person name="Tettelin H."/>
            <person name="Fouts D.E."/>
            <person name="Eisen J.A."/>
            <person name="Gill S.R."/>
            <person name="Holtzapple E.K."/>
            <person name="Okstad O.A."/>
            <person name="Helgason E."/>
            <person name="Rilstone J."/>
            <person name="Wu M."/>
            <person name="Kolonay J.F."/>
            <person name="Beanan M.J."/>
            <person name="Dodson R.J."/>
            <person name="Brinkac L.M."/>
            <person name="Gwinn M.L."/>
            <person name="DeBoy R.T."/>
            <person name="Madpu R."/>
            <person name="Daugherty S.C."/>
            <person name="Durkin A.S."/>
            <person name="Haft D.H."/>
            <person name="Nelson W.C."/>
            <person name="Peterson J.D."/>
            <person name="Pop M."/>
            <person name="Khouri H.M."/>
            <person name="Radune D."/>
            <person name="Benton J.L."/>
            <person name="Mahamoud Y."/>
            <person name="Jiang L."/>
            <person name="Hance I.R."/>
            <person name="Weidman J.F."/>
            <person name="Berry K.J."/>
            <person name="Plaut R.D."/>
            <person name="Wolf A.M."/>
            <person name="Watkins K.L."/>
            <person name="Nierman W.C."/>
            <person name="Hazen A."/>
            <person name="Cline R.T."/>
            <person name="Redmond C."/>
            <person name="Thwaite J.E."/>
            <person name="White O."/>
            <person name="Salzberg S.L."/>
            <person name="Thomason B."/>
            <person name="Friedlander A.M."/>
            <person name="Koehler T.M."/>
            <person name="Hanna P.C."/>
            <person name="Kolstoe A.-B."/>
            <person name="Fraser C.M."/>
        </authorList>
    </citation>
    <scope>NUCLEOTIDE SEQUENCE [LARGE SCALE GENOMIC DNA]</scope>
    <source>
        <strain evidence="6">Ames / isolate Porton</strain>
    </source>
</reference>
<reference evidence="7" key="2">
    <citation type="journal article" date="2009" name="J. Bacteriol.">
        <title>The complete genome sequence of Bacillus anthracis Ames 'Ancestor'.</title>
        <authorList>
            <person name="Ravel J."/>
            <person name="Jiang L."/>
            <person name="Stanley S.T."/>
            <person name="Wilson M.R."/>
            <person name="Decker R.S."/>
            <person name="Read T.D."/>
            <person name="Worsham P."/>
            <person name="Keim P.S."/>
            <person name="Salzberg S.L."/>
            <person name="Fraser-Liggett C.M."/>
            <person name="Rasko D.A."/>
        </authorList>
    </citation>
    <scope>NUCLEOTIDE SEQUENCE [LARGE SCALE GENOMIC DNA]</scope>
    <source>
        <strain evidence="7">Ames ancestor</strain>
    </source>
</reference>
<reference evidence="8" key="3">
    <citation type="submission" date="2004-01" db="EMBL/GenBank/DDBJ databases">
        <title>Complete genome sequence of Bacillus anthracis Sterne.</title>
        <authorList>
            <person name="Brettin T.S."/>
            <person name="Bruce D."/>
            <person name="Challacombe J.F."/>
            <person name="Gilna P."/>
            <person name="Han C."/>
            <person name="Hill K."/>
            <person name="Hitchcock P."/>
            <person name="Jackson P."/>
            <person name="Keim P."/>
            <person name="Longmire J."/>
            <person name="Lucas S."/>
            <person name="Okinaka R."/>
            <person name="Richardson P."/>
            <person name="Rubin E."/>
            <person name="Tice H."/>
        </authorList>
    </citation>
    <scope>NUCLEOTIDE SEQUENCE [LARGE SCALE GENOMIC DNA]</scope>
    <source>
        <strain evidence="8">Sterne</strain>
    </source>
</reference>
<reference evidence="5" key="4">
    <citation type="journal article" date="2007" name="J. Bacteriol.">
        <title>Morphogenesis of the Bacillus anthracis spore.</title>
        <authorList>
            <person name="Giorno R."/>
            <person name="Bozue J."/>
            <person name="Cote C."/>
            <person name="Wenzel T."/>
            <person name="Moody K.S."/>
            <person name="Mallozzi M."/>
            <person name="Ryan M."/>
            <person name="Wang R."/>
            <person name="Zielke R."/>
            <person name="Maddock J.R."/>
            <person name="Friedlander A."/>
            <person name="Welkos S."/>
            <person name="Driks A."/>
        </authorList>
    </citation>
    <scope>FUNCTION</scope>
    <scope>DEVELOPMENTAL STAGE</scope>
    <scope>DISRUPTION PHENOTYPE</scope>
</reference>
<protein>
    <recommendedName>
        <fullName evidence="6">Stage IV sporulation protein A</fullName>
        <ecNumber evidence="1">3.6.1.-</ecNumber>
    </recommendedName>
    <alternativeName>
        <fullName evidence="4">Coat morphogenetic protein SpoIVA</fullName>
    </alternativeName>
</protein>
<proteinExistence type="evidence at transcript level"/>
<gene>
    <name evidence="6" type="primary">spoIVA</name>
    <name type="ordered locus">BA_1530</name>
    <name type="ordered locus">BAS1419</name>
    <name type="ordered locus">GBAA_1530</name>
</gene>
<feature type="chain" id="PRO_0000422237" description="Stage IV sporulation protein A">
    <location>
        <begin position="1"/>
        <end position="492"/>
    </location>
</feature>
<feature type="short sequence motif" description="Walker A motif; involved in ATP-binding" evidence="2 5">
    <location>
        <begin position="24"/>
        <end position="31"/>
    </location>
</feature>
<feature type="binding site" evidence="1">
    <location>
        <begin position="24"/>
        <end position="31"/>
    </location>
    <ligand>
        <name>ATP</name>
        <dbReference type="ChEBI" id="CHEBI:30616"/>
    </ligand>
</feature>
<comment type="function">
    <text evidence="1 3">ATPase. Has a role at an early stage in the morphogenesis of the spore coat outer layers. Directs the assembly of the coat and exosporium to an area around the forespore.</text>
</comment>
<comment type="catalytic activity">
    <reaction evidence="1">
        <text>ATP + H2O = ADP + phosphate + H(+)</text>
        <dbReference type="Rhea" id="RHEA:13065"/>
        <dbReference type="ChEBI" id="CHEBI:15377"/>
        <dbReference type="ChEBI" id="CHEBI:15378"/>
        <dbReference type="ChEBI" id="CHEBI:30616"/>
        <dbReference type="ChEBI" id="CHEBI:43474"/>
        <dbReference type="ChEBI" id="CHEBI:456216"/>
    </reaction>
</comment>
<comment type="subcellular location">
    <subcellularLocation>
        <location evidence="1">Cytoplasm</location>
    </subcellularLocation>
    <text evidence="1">Localized on spore coat surrounding the forespore.</text>
</comment>
<comment type="developmental stage">
    <text evidence="3">Expressed in early onset of sporulation.</text>
</comment>
<comment type="disruption phenotype">
    <text evidence="3">Defective in formation of mature forespores. Fails to progress beyond very early stages of sporulation. Forespores lack the germ cell wall or cortex and the mother cells are filled with swirls of electron-dense material.</text>
</comment>
<dbReference type="EC" id="3.6.1.-" evidence="1"/>
<dbReference type="EMBL" id="AE016879">
    <property type="protein sequence ID" value="AAP25467.1"/>
    <property type="molecule type" value="Genomic_DNA"/>
</dbReference>
<dbReference type="EMBL" id="AE017334">
    <property type="protein sequence ID" value="AAT30628.2"/>
    <property type="molecule type" value="Genomic_DNA"/>
</dbReference>
<dbReference type="EMBL" id="AE017225">
    <property type="protein sequence ID" value="AAT53739.1"/>
    <property type="molecule type" value="Genomic_DNA"/>
</dbReference>
<dbReference type="RefSeq" id="NP_843981.1">
    <property type="nucleotide sequence ID" value="NC_003997.3"/>
</dbReference>
<dbReference type="RefSeq" id="WP_000416519.1">
    <property type="nucleotide sequence ID" value="NZ_WXXJ01000020.1"/>
</dbReference>
<dbReference type="RefSeq" id="YP_027688.1">
    <property type="nucleotide sequence ID" value="NC_005945.1"/>
</dbReference>
<dbReference type="IntAct" id="Q81SW4">
    <property type="interactions" value="6"/>
</dbReference>
<dbReference type="STRING" id="261594.GBAA_1530"/>
<dbReference type="DNASU" id="1087217"/>
<dbReference type="GeneID" id="93009531"/>
<dbReference type="KEGG" id="ban:BA_1530"/>
<dbReference type="KEGG" id="bar:GBAA_1530"/>
<dbReference type="KEGG" id="bat:BAS1419"/>
<dbReference type="PATRIC" id="fig|198094.11.peg.1502"/>
<dbReference type="eggNOG" id="COG0699">
    <property type="taxonomic scope" value="Bacteria"/>
</dbReference>
<dbReference type="HOGENOM" id="CLU_043635_0_0_9"/>
<dbReference type="OMA" id="RMPENAQ"/>
<dbReference type="OrthoDB" id="9761464at2"/>
<dbReference type="Proteomes" id="UP000000427">
    <property type="component" value="Chromosome"/>
</dbReference>
<dbReference type="Proteomes" id="UP000000594">
    <property type="component" value="Chromosome"/>
</dbReference>
<dbReference type="GO" id="GO:0005737">
    <property type="term" value="C:cytoplasm"/>
    <property type="evidence" value="ECO:0007669"/>
    <property type="project" value="UniProtKB-SubCell"/>
</dbReference>
<dbReference type="GO" id="GO:0042601">
    <property type="term" value="C:endospore-forming forespore"/>
    <property type="evidence" value="ECO:0000250"/>
    <property type="project" value="UniProtKB"/>
</dbReference>
<dbReference type="GO" id="GO:0031160">
    <property type="term" value="C:spore wall"/>
    <property type="evidence" value="ECO:0000250"/>
    <property type="project" value="UniProtKB"/>
</dbReference>
<dbReference type="GO" id="GO:0005524">
    <property type="term" value="F:ATP binding"/>
    <property type="evidence" value="ECO:0000250"/>
    <property type="project" value="UniProtKB"/>
</dbReference>
<dbReference type="GO" id="GO:0016887">
    <property type="term" value="F:ATP hydrolysis activity"/>
    <property type="evidence" value="ECO:0000250"/>
    <property type="project" value="UniProtKB"/>
</dbReference>
<dbReference type="GO" id="GO:0070499">
    <property type="term" value="P:exosporium assembly"/>
    <property type="evidence" value="ECO:0000314"/>
    <property type="project" value="UniProtKB"/>
</dbReference>
<dbReference type="GO" id="GO:0042244">
    <property type="term" value="P:spore wall assembly"/>
    <property type="evidence" value="ECO:0000315"/>
    <property type="project" value="UniProtKB"/>
</dbReference>
<dbReference type="GO" id="GO:0030435">
    <property type="term" value="P:sporulation resulting in formation of a cellular spore"/>
    <property type="evidence" value="ECO:0000314"/>
    <property type="project" value="UniProtKB"/>
</dbReference>
<dbReference type="CDD" id="cd00882">
    <property type="entry name" value="Ras_like_GTPase"/>
    <property type="match status" value="1"/>
</dbReference>
<dbReference type="FunFam" id="3.40.50.300:FF:000648">
    <property type="entry name" value="Stage IV sporulation protein A"/>
    <property type="match status" value="1"/>
</dbReference>
<dbReference type="Gene3D" id="3.40.50.300">
    <property type="entry name" value="P-loop containing nucleotide triphosphate hydrolases"/>
    <property type="match status" value="1"/>
</dbReference>
<dbReference type="InterPro" id="IPR027417">
    <property type="entry name" value="P-loop_NTPase"/>
</dbReference>
<dbReference type="InterPro" id="IPR046842">
    <property type="entry name" value="SpoIVA_ATPase"/>
</dbReference>
<dbReference type="InterPro" id="IPR046840">
    <property type="entry name" value="SpoIVA_C"/>
</dbReference>
<dbReference type="InterPro" id="IPR046841">
    <property type="entry name" value="SpoIVA_middle"/>
</dbReference>
<dbReference type="InterPro" id="IPR014201">
    <property type="entry name" value="Spore_IV_A"/>
</dbReference>
<dbReference type="NCBIfam" id="TIGR02836">
    <property type="entry name" value="spore_IV_A"/>
    <property type="match status" value="1"/>
</dbReference>
<dbReference type="Pfam" id="PF09547">
    <property type="entry name" value="SpoIVA_ATPase"/>
    <property type="match status" value="1"/>
</dbReference>
<dbReference type="Pfam" id="PF20439">
    <property type="entry name" value="SpoIVA_C"/>
    <property type="match status" value="1"/>
</dbReference>
<dbReference type="Pfam" id="PF20438">
    <property type="entry name" value="SpoIVA_middle"/>
    <property type="match status" value="1"/>
</dbReference>
<dbReference type="PIRSF" id="PIRSF007466">
    <property type="entry name" value="SpoIVA"/>
    <property type="match status" value="1"/>
</dbReference>
<dbReference type="SUPFAM" id="SSF52540">
    <property type="entry name" value="P-loop containing nucleoside triphosphate hydrolases"/>
    <property type="match status" value="1"/>
</dbReference>
<evidence type="ECO:0000250" key="1">
    <source>
        <dbReference type="UniProtKB" id="P35149"/>
    </source>
</evidence>
<evidence type="ECO:0000255" key="2"/>
<evidence type="ECO:0000269" key="3">
    <source>
    </source>
</evidence>
<evidence type="ECO:0000303" key="4">
    <source>
    </source>
</evidence>
<evidence type="ECO:0000305" key="5"/>
<evidence type="ECO:0000312" key="6">
    <source>
        <dbReference type="EMBL" id="AAP25467.1"/>
    </source>
</evidence>
<evidence type="ECO:0000312" key="7">
    <source>
        <dbReference type="EMBL" id="AAT30628.2"/>
    </source>
</evidence>
<evidence type="ECO:0000312" key="8">
    <source>
        <dbReference type="EMBL" id="AAT53739.1"/>
    </source>
</evidence>